<keyword id="KW-0256">Endoplasmic reticulum</keyword>
<keyword id="KW-0460">Magnesium</keyword>
<keyword id="KW-0472">Membrane</keyword>
<keyword id="KW-0479">Metal-binding</keyword>
<keyword id="KW-0520">NAD</keyword>
<keyword id="KW-0521">NADP</keyword>
<keyword id="KW-0808">Transferase</keyword>
<keyword id="KW-0812">Transmembrane</keyword>
<keyword id="KW-1133">Transmembrane helix</keyword>
<organism>
    <name type="scientific">Botryococcus braunii</name>
    <name type="common">Green alga</name>
    <dbReference type="NCBI Taxonomy" id="38881"/>
    <lineage>
        <taxon>Eukaryota</taxon>
        <taxon>Viridiplantae</taxon>
        <taxon>Chlorophyta</taxon>
        <taxon>core chlorophytes</taxon>
        <taxon>Trebouxiophyceae</taxon>
        <taxon>Trebouxiophyceae incertae sedis</taxon>
        <taxon>Elliptochloris clade</taxon>
        <taxon>Botryococcus</taxon>
    </lineage>
</organism>
<evidence type="ECO:0000250" key="1"/>
<evidence type="ECO:0000250" key="2">
    <source>
        <dbReference type="UniProtKB" id="P37268"/>
    </source>
</evidence>
<evidence type="ECO:0000255" key="3"/>
<evidence type="ECO:0000269" key="4">
    <source>
    </source>
</evidence>
<evidence type="ECO:0000305" key="5"/>
<accession>Q9SDW9</accession>
<accession>Q9M678</accession>
<feature type="chain" id="PRO_0000421364" description="Squalene synthase BSS">
    <location>
        <begin position="1"/>
        <end position="461"/>
    </location>
</feature>
<feature type="transmembrane region" description="Helical" evidence="3">
    <location>
        <begin position="430"/>
        <end position="450"/>
    </location>
</feature>
<feature type="binding site" evidence="2">
    <location>
        <position position="51"/>
    </location>
    <ligand>
        <name>NADP(+)</name>
        <dbReference type="ChEBI" id="CHEBI:58349"/>
    </ligand>
</feature>
<feature type="binding site" evidence="2">
    <location>
        <position position="76"/>
    </location>
    <ligand>
        <name>NADP(+)</name>
        <dbReference type="ChEBI" id="CHEBI:58349"/>
    </ligand>
</feature>
<feature type="binding site" evidence="2">
    <location>
        <position position="79"/>
    </location>
    <ligand>
        <name>Mg(2+)</name>
        <dbReference type="ChEBI" id="CHEBI:18420"/>
    </ligand>
</feature>
<feature type="binding site" evidence="2">
    <location>
        <position position="82"/>
    </location>
    <ligand>
        <name>Mg(2+)</name>
        <dbReference type="ChEBI" id="CHEBI:18420"/>
    </ligand>
</feature>
<feature type="binding site" evidence="2">
    <location>
        <position position="83"/>
    </location>
    <ligand>
        <name>Mg(2+)</name>
        <dbReference type="ChEBI" id="CHEBI:18420"/>
    </ligand>
</feature>
<feature type="binding site" evidence="2">
    <location>
        <position position="219"/>
    </location>
    <ligand>
        <name>NADP(+)</name>
        <dbReference type="ChEBI" id="CHEBI:58349"/>
    </ligand>
</feature>
<feature type="binding site" evidence="2">
    <location>
        <position position="322"/>
    </location>
    <ligand>
        <name>NADP(+)</name>
        <dbReference type="ChEBI" id="CHEBI:58349"/>
    </ligand>
</feature>
<feature type="binding site" evidence="2">
    <location>
        <position position="324"/>
    </location>
    <ligand>
        <name>NADP(+)</name>
        <dbReference type="ChEBI" id="CHEBI:58349"/>
    </ligand>
</feature>
<gene>
    <name evidence="5" type="primary">BSS</name>
</gene>
<sequence>MGMLRWGVESLQNPDELIPVLRMIYADKFGKIKPKDEDRGFCYEILNLVSRSFAIVIQQLPAQLRDPVCIFYLVLRALDTVEDDMKIAATTKIPLLRDFYEKISDRSFRMTAGDQKDYIRLLDQYPKVTSVFLKLTPREQEIIADITKRMGNGMADFVHKGVPDTVGDYDLYCHYVAGVVGLGLSQLFVASGLQSPSLTRSEDLSNHMGLFLQKTNIIRDYFEDINELPAPRMFWPREIWGKYANNLAEFKDPANKAAAMCCLNEMVTDALRHAVYCLQYMSMIEDPQIFNFCAIPQTMAFGTLSLCYNNYTIFTGPKAAVKLRRGTTAKLMYTSNNMFAMYRHFLNFAEKLEVRCNTETSEDPSVTTTLEHLHKIKAACKAGLARTKDDTFDELRSRLLALTGGSFYLAWTYNFLDLRGPGDLPTFLSVTQHWWSILIFLISIAVFFIPSRPSPRPTLSA</sequence>
<name>BSS_BOTBR</name>
<protein>
    <recommendedName>
        <fullName evidence="5">Squalene synthase BSS</fullName>
        <ecNumber evidence="4">2.5.1.21</ecNumber>
    </recommendedName>
</protein>
<dbReference type="EC" id="2.5.1.21" evidence="4"/>
<dbReference type="EMBL" id="AF205791">
    <property type="protein sequence ID" value="AAF20201.1"/>
    <property type="molecule type" value="mRNA"/>
</dbReference>
<dbReference type="EMBL" id="AH009227">
    <property type="protein sequence ID" value="AAF63255.1"/>
    <property type="molecule type" value="Genomic_DNA"/>
</dbReference>
<dbReference type="SMR" id="Q9SDW9"/>
<dbReference type="BioCyc" id="MetaCyc:MONOMER-14640"/>
<dbReference type="BRENDA" id="2.5.1.21">
    <property type="organism ID" value="915"/>
</dbReference>
<dbReference type="GO" id="GO:0005789">
    <property type="term" value="C:endoplasmic reticulum membrane"/>
    <property type="evidence" value="ECO:0007669"/>
    <property type="project" value="UniProtKB-SubCell"/>
</dbReference>
<dbReference type="GO" id="GO:0046872">
    <property type="term" value="F:metal ion binding"/>
    <property type="evidence" value="ECO:0007669"/>
    <property type="project" value="UniProtKB-KW"/>
</dbReference>
<dbReference type="GO" id="GO:0051996">
    <property type="term" value="F:squalene synthase [NAD(P)H] activity"/>
    <property type="evidence" value="ECO:0000314"/>
    <property type="project" value="UniProtKB"/>
</dbReference>
<dbReference type="GO" id="GO:0045338">
    <property type="term" value="P:farnesyl diphosphate metabolic process"/>
    <property type="evidence" value="ECO:0007669"/>
    <property type="project" value="InterPro"/>
</dbReference>
<dbReference type="GO" id="GO:0016126">
    <property type="term" value="P:sterol biosynthetic process"/>
    <property type="evidence" value="ECO:0000314"/>
    <property type="project" value="UniProtKB"/>
</dbReference>
<dbReference type="CDD" id="cd00683">
    <property type="entry name" value="Trans_IPPS_HH"/>
    <property type="match status" value="1"/>
</dbReference>
<dbReference type="FunFam" id="1.10.600.10:FF:000023">
    <property type="entry name" value="Squalene synthase"/>
    <property type="match status" value="1"/>
</dbReference>
<dbReference type="Gene3D" id="1.10.600.10">
    <property type="entry name" value="Farnesyl Diphosphate Synthase"/>
    <property type="match status" value="1"/>
</dbReference>
<dbReference type="InterPro" id="IPR008949">
    <property type="entry name" value="Isoprenoid_synthase_dom_sf"/>
</dbReference>
<dbReference type="InterPro" id="IPR002060">
    <property type="entry name" value="Squ/phyt_synthse"/>
</dbReference>
<dbReference type="InterPro" id="IPR006449">
    <property type="entry name" value="Squal_synth-like"/>
</dbReference>
<dbReference type="InterPro" id="IPR019845">
    <property type="entry name" value="Squalene/phytoene_synthase_CS"/>
</dbReference>
<dbReference type="InterPro" id="IPR044844">
    <property type="entry name" value="Trans_IPPS_euk-type"/>
</dbReference>
<dbReference type="InterPro" id="IPR033904">
    <property type="entry name" value="Trans_IPPS_HH"/>
</dbReference>
<dbReference type="NCBIfam" id="TIGR01559">
    <property type="entry name" value="squal_synth"/>
    <property type="match status" value="1"/>
</dbReference>
<dbReference type="PANTHER" id="PTHR11626">
    <property type="entry name" value="FARNESYL-DIPHOSPHATE FARNESYLTRANSFERASE"/>
    <property type="match status" value="1"/>
</dbReference>
<dbReference type="PANTHER" id="PTHR11626:SF2">
    <property type="entry name" value="SQUALENE SYNTHASE"/>
    <property type="match status" value="1"/>
</dbReference>
<dbReference type="Pfam" id="PF00494">
    <property type="entry name" value="SQS_PSY"/>
    <property type="match status" value="1"/>
</dbReference>
<dbReference type="SFLD" id="SFLDS00005">
    <property type="entry name" value="Isoprenoid_Synthase_Type_I"/>
    <property type="match status" value="1"/>
</dbReference>
<dbReference type="SFLD" id="SFLDG01018">
    <property type="entry name" value="Squalene/Phytoene_Synthase_Lik"/>
    <property type="match status" value="1"/>
</dbReference>
<dbReference type="SUPFAM" id="SSF48576">
    <property type="entry name" value="Terpenoid synthases"/>
    <property type="match status" value="1"/>
</dbReference>
<dbReference type="PROSITE" id="PS01044">
    <property type="entry name" value="SQUALEN_PHYTOEN_SYN_1"/>
    <property type="match status" value="1"/>
</dbReference>
<dbReference type="PROSITE" id="PS01045">
    <property type="entry name" value="SQUALEN_PHYTOEN_SYN_2"/>
    <property type="match status" value="1"/>
</dbReference>
<comment type="function">
    <text evidence="4">Converts farnesyl diphosphate (FPP) into squalene, a precursor for sterol biosynthesis in eukaryotes. Does not possess botryococcene synthase activity.</text>
</comment>
<comment type="catalytic activity">
    <reaction evidence="4">
        <text>2 (2E,6E)-farnesyl diphosphate + NADPH + H(+) = squalene + 2 diphosphate + NADP(+)</text>
        <dbReference type="Rhea" id="RHEA:32295"/>
        <dbReference type="ChEBI" id="CHEBI:15378"/>
        <dbReference type="ChEBI" id="CHEBI:15440"/>
        <dbReference type="ChEBI" id="CHEBI:33019"/>
        <dbReference type="ChEBI" id="CHEBI:57783"/>
        <dbReference type="ChEBI" id="CHEBI:58349"/>
        <dbReference type="ChEBI" id="CHEBI:175763"/>
        <dbReference type="EC" id="2.5.1.21"/>
    </reaction>
</comment>
<comment type="catalytic activity">
    <reaction evidence="4">
        <text>2 (2E,6E)-farnesyl diphosphate + NADH + H(+) = squalene + 2 diphosphate + NAD(+)</text>
        <dbReference type="Rhea" id="RHEA:32299"/>
        <dbReference type="ChEBI" id="CHEBI:15378"/>
        <dbReference type="ChEBI" id="CHEBI:15440"/>
        <dbReference type="ChEBI" id="CHEBI:33019"/>
        <dbReference type="ChEBI" id="CHEBI:57540"/>
        <dbReference type="ChEBI" id="CHEBI:57945"/>
        <dbReference type="ChEBI" id="CHEBI:175763"/>
        <dbReference type="EC" id="2.5.1.21"/>
    </reaction>
</comment>
<comment type="cofactor">
    <cofactor evidence="2">
        <name>Mg(2+)</name>
        <dbReference type="ChEBI" id="CHEBI:18420"/>
    </cofactor>
</comment>
<comment type="subcellular location">
    <subcellularLocation>
        <location evidence="1">Endoplasmic reticulum membrane</location>
        <topology evidence="3">Single-pass membrane protein</topology>
    </subcellularLocation>
</comment>
<comment type="developmental stage">
    <text evidence="4">Transient induction with an apparent maximum occurring 6 to 8 days after subculturing.</text>
</comment>
<comment type="similarity">
    <text evidence="5">Belongs to the phytoene/squalene synthase family.</text>
</comment>
<proteinExistence type="evidence at protein level"/>
<reference key="1">
    <citation type="journal article" date="2000" name="Arch. Biochem. Biophys.">
        <title>Molecular characterization of squalene synthase from the green microalga Botryococcus braunii, race B.</title>
        <authorList>
            <person name="Okada S."/>
            <person name="Devarenne T.P."/>
            <person name="Chappell J."/>
        </authorList>
    </citation>
    <scope>NUCLEOTIDE SEQUENCE [GENOMIC DNA / MRNA]</scope>
    <scope>FUNCTION</scope>
    <scope>CATALYTIC ACTIVITY</scope>
    <scope>DEVELOPMENTAL STAGE</scope>
    <source>
        <strain>Race B</strain>
    </source>
</reference>